<organism>
    <name type="scientific">Aeromonas hydrophila subsp. hydrophila (strain ATCC 7966 / DSM 30187 / BCRC 13018 / CCUG 14551 / JCM 1027 / KCTC 2358 / NCIMB 9240 / NCTC 8049)</name>
    <dbReference type="NCBI Taxonomy" id="380703"/>
    <lineage>
        <taxon>Bacteria</taxon>
        <taxon>Pseudomonadati</taxon>
        <taxon>Pseudomonadota</taxon>
        <taxon>Gammaproteobacteria</taxon>
        <taxon>Aeromonadales</taxon>
        <taxon>Aeromonadaceae</taxon>
        <taxon>Aeromonas</taxon>
    </lineage>
</organism>
<accession>A0KF25</accession>
<comment type="function">
    <text evidence="1">Protein S19 forms a complex with S13 that binds strongly to the 16S ribosomal RNA.</text>
</comment>
<comment type="similarity">
    <text evidence="1">Belongs to the universal ribosomal protein uS19 family.</text>
</comment>
<sequence length="92" mass="10440">MPRSLKKGPFIDLHLLKKVEKAVESGDKKPVKTWSRRSMIIPNMIGLTIAVHNGRQHVPVFVTEEMIGHKLGEFAPTRTYRGHAADKKAKKR</sequence>
<proteinExistence type="inferred from homology"/>
<evidence type="ECO:0000255" key="1">
    <source>
        <dbReference type="HAMAP-Rule" id="MF_00531"/>
    </source>
</evidence>
<evidence type="ECO:0000305" key="2"/>
<feature type="chain" id="PRO_1000051007" description="Small ribosomal subunit protein uS19">
    <location>
        <begin position="1"/>
        <end position="92"/>
    </location>
</feature>
<reference key="1">
    <citation type="journal article" date="2006" name="J. Bacteriol.">
        <title>Genome sequence of Aeromonas hydrophila ATCC 7966T: jack of all trades.</title>
        <authorList>
            <person name="Seshadri R."/>
            <person name="Joseph S.W."/>
            <person name="Chopra A.K."/>
            <person name="Sha J."/>
            <person name="Shaw J."/>
            <person name="Graf J."/>
            <person name="Haft D.H."/>
            <person name="Wu M."/>
            <person name="Ren Q."/>
            <person name="Rosovitz M.J."/>
            <person name="Madupu R."/>
            <person name="Tallon L."/>
            <person name="Kim M."/>
            <person name="Jin S."/>
            <person name="Vuong H."/>
            <person name="Stine O.C."/>
            <person name="Ali A."/>
            <person name="Horneman A.J."/>
            <person name="Heidelberg J.F."/>
        </authorList>
    </citation>
    <scope>NUCLEOTIDE SEQUENCE [LARGE SCALE GENOMIC DNA]</scope>
    <source>
        <strain>ATCC 7966 / DSM 30187 / BCRC 13018 / CCUG 14551 / JCM 1027 / KCTC 2358 / NCIMB 9240 / NCTC 8049</strain>
    </source>
</reference>
<dbReference type="EMBL" id="CP000462">
    <property type="protein sequence ID" value="ABK39570.1"/>
    <property type="molecule type" value="Genomic_DNA"/>
</dbReference>
<dbReference type="RefSeq" id="WP_005307960.1">
    <property type="nucleotide sequence ID" value="NC_008570.1"/>
</dbReference>
<dbReference type="RefSeq" id="YP_854843.1">
    <property type="nucleotide sequence ID" value="NC_008570.1"/>
</dbReference>
<dbReference type="SMR" id="A0KF25"/>
<dbReference type="STRING" id="380703.AHA_0313"/>
<dbReference type="EnsemblBacteria" id="ABK39570">
    <property type="protein sequence ID" value="ABK39570"/>
    <property type="gene ID" value="AHA_0313"/>
</dbReference>
<dbReference type="GeneID" id="97858398"/>
<dbReference type="KEGG" id="aha:AHA_0313"/>
<dbReference type="PATRIC" id="fig|380703.7.peg.302"/>
<dbReference type="eggNOG" id="COG0185">
    <property type="taxonomic scope" value="Bacteria"/>
</dbReference>
<dbReference type="HOGENOM" id="CLU_144911_0_1_6"/>
<dbReference type="OrthoDB" id="9797833at2"/>
<dbReference type="PRO" id="PR:A0KF25"/>
<dbReference type="Proteomes" id="UP000000756">
    <property type="component" value="Chromosome"/>
</dbReference>
<dbReference type="GO" id="GO:0005737">
    <property type="term" value="C:cytoplasm"/>
    <property type="evidence" value="ECO:0007669"/>
    <property type="project" value="UniProtKB-ARBA"/>
</dbReference>
<dbReference type="GO" id="GO:0015935">
    <property type="term" value="C:small ribosomal subunit"/>
    <property type="evidence" value="ECO:0007669"/>
    <property type="project" value="InterPro"/>
</dbReference>
<dbReference type="GO" id="GO:0019843">
    <property type="term" value="F:rRNA binding"/>
    <property type="evidence" value="ECO:0007669"/>
    <property type="project" value="UniProtKB-UniRule"/>
</dbReference>
<dbReference type="GO" id="GO:0003735">
    <property type="term" value="F:structural constituent of ribosome"/>
    <property type="evidence" value="ECO:0007669"/>
    <property type="project" value="InterPro"/>
</dbReference>
<dbReference type="GO" id="GO:0000028">
    <property type="term" value="P:ribosomal small subunit assembly"/>
    <property type="evidence" value="ECO:0007669"/>
    <property type="project" value="TreeGrafter"/>
</dbReference>
<dbReference type="GO" id="GO:0006412">
    <property type="term" value="P:translation"/>
    <property type="evidence" value="ECO:0007669"/>
    <property type="project" value="UniProtKB-UniRule"/>
</dbReference>
<dbReference type="FunFam" id="3.30.860.10:FF:000001">
    <property type="entry name" value="30S ribosomal protein S19"/>
    <property type="match status" value="1"/>
</dbReference>
<dbReference type="Gene3D" id="3.30.860.10">
    <property type="entry name" value="30s Ribosomal Protein S19, Chain A"/>
    <property type="match status" value="1"/>
</dbReference>
<dbReference type="HAMAP" id="MF_00531">
    <property type="entry name" value="Ribosomal_uS19"/>
    <property type="match status" value="1"/>
</dbReference>
<dbReference type="InterPro" id="IPR002222">
    <property type="entry name" value="Ribosomal_uS19"/>
</dbReference>
<dbReference type="InterPro" id="IPR005732">
    <property type="entry name" value="Ribosomal_uS19_bac-type"/>
</dbReference>
<dbReference type="InterPro" id="IPR020934">
    <property type="entry name" value="Ribosomal_uS19_CS"/>
</dbReference>
<dbReference type="InterPro" id="IPR023575">
    <property type="entry name" value="Ribosomal_uS19_SF"/>
</dbReference>
<dbReference type="NCBIfam" id="TIGR01050">
    <property type="entry name" value="rpsS_bact"/>
    <property type="match status" value="1"/>
</dbReference>
<dbReference type="PANTHER" id="PTHR11880">
    <property type="entry name" value="RIBOSOMAL PROTEIN S19P FAMILY MEMBER"/>
    <property type="match status" value="1"/>
</dbReference>
<dbReference type="PANTHER" id="PTHR11880:SF8">
    <property type="entry name" value="SMALL RIBOSOMAL SUBUNIT PROTEIN US19M"/>
    <property type="match status" value="1"/>
</dbReference>
<dbReference type="Pfam" id="PF00203">
    <property type="entry name" value="Ribosomal_S19"/>
    <property type="match status" value="1"/>
</dbReference>
<dbReference type="PIRSF" id="PIRSF002144">
    <property type="entry name" value="Ribosomal_S19"/>
    <property type="match status" value="1"/>
</dbReference>
<dbReference type="PRINTS" id="PR00975">
    <property type="entry name" value="RIBOSOMALS19"/>
</dbReference>
<dbReference type="SUPFAM" id="SSF54570">
    <property type="entry name" value="Ribosomal protein S19"/>
    <property type="match status" value="1"/>
</dbReference>
<dbReference type="PROSITE" id="PS00323">
    <property type="entry name" value="RIBOSOMAL_S19"/>
    <property type="match status" value="1"/>
</dbReference>
<name>RS19_AERHH</name>
<gene>
    <name evidence="1" type="primary">rpsS</name>
    <name type="ordered locus">AHA_0313</name>
</gene>
<protein>
    <recommendedName>
        <fullName evidence="1">Small ribosomal subunit protein uS19</fullName>
    </recommendedName>
    <alternativeName>
        <fullName evidence="2">30S ribosomal protein S19</fullName>
    </alternativeName>
</protein>
<keyword id="KW-1185">Reference proteome</keyword>
<keyword id="KW-0687">Ribonucleoprotein</keyword>
<keyword id="KW-0689">Ribosomal protein</keyword>
<keyword id="KW-0694">RNA-binding</keyword>
<keyword id="KW-0699">rRNA-binding</keyword>